<keyword id="KW-0067">ATP-binding</keyword>
<keyword id="KW-0175">Coiled coil</keyword>
<keyword id="KW-0418">Kinase</keyword>
<keyword id="KW-0460">Magnesium</keyword>
<keyword id="KW-0469">Meiosis</keyword>
<keyword id="KW-0479">Metal-binding</keyword>
<keyword id="KW-0547">Nucleotide-binding</keyword>
<keyword id="KW-0539">Nucleus</keyword>
<keyword id="KW-1185">Reference proteome</keyword>
<keyword id="KW-0808">Transferase</keyword>
<keyword id="KW-0829">Tyrosine-protein kinase</keyword>
<feature type="chain" id="PRO_0000409530" description="Wee1-like protein kinase 2-C">
    <location>
        <begin position="1"/>
        <end position="554"/>
    </location>
</feature>
<feature type="domain" description="Protein kinase" evidence="3">
    <location>
        <begin position="213"/>
        <end position="487"/>
    </location>
</feature>
<feature type="region of interest" description="Disordered" evidence="5">
    <location>
        <begin position="1"/>
        <end position="86"/>
    </location>
</feature>
<feature type="region of interest" description="Disordered" evidence="5">
    <location>
        <begin position="145"/>
        <end position="183"/>
    </location>
</feature>
<feature type="coiled-coil region" evidence="2">
    <location>
        <begin position="490"/>
        <end position="516"/>
    </location>
</feature>
<feature type="compositionally biased region" description="Polar residues" evidence="5">
    <location>
        <begin position="38"/>
        <end position="48"/>
    </location>
</feature>
<feature type="compositionally biased region" description="Polar residues" evidence="5">
    <location>
        <begin position="147"/>
        <end position="163"/>
    </location>
</feature>
<feature type="active site" description="Proton acceptor" evidence="3 4">
    <location>
        <position position="340"/>
    </location>
</feature>
<feature type="binding site" evidence="3">
    <location>
        <begin position="219"/>
        <end position="227"/>
    </location>
    <ligand>
        <name>ATP</name>
        <dbReference type="ChEBI" id="CHEBI:30616"/>
    </ligand>
</feature>
<feature type="binding site" evidence="3">
    <location>
        <position position="242"/>
    </location>
    <ligand>
        <name>ATP</name>
        <dbReference type="ChEBI" id="CHEBI:30616"/>
    </ligand>
</feature>
<feature type="binding site" evidence="1">
    <location>
        <position position="345"/>
    </location>
    <ligand>
        <name>Mg(2+)</name>
        <dbReference type="ChEBI" id="CHEBI:18420"/>
    </ligand>
</feature>
<feature type="binding site" evidence="1">
    <location>
        <position position="377"/>
    </location>
    <ligand>
        <name>Mg(2+)</name>
        <dbReference type="ChEBI" id="CHEBI:18420"/>
    </ligand>
</feature>
<comment type="function">
    <text evidence="1">Protein tyrosine kinase that phosphorylates and inhibits cdk1 and acts as a regulator of meiosis in oocytes. Required to ensure the meiotic cell cycle in oocytes by phosphorylating cdk1 at 'Tyr-15', leading to inhibit cdk1 activity and prevent meiosis (By similarity).</text>
</comment>
<comment type="catalytic activity">
    <reaction evidence="4">
        <text>L-tyrosyl-[protein] + ATP = O-phospho-L-tyrosyl-[protein] + ADP + H(+)</text>
        <dbReference type="Rhea" id="RHEA:10596"/>
        <dbReference type="Rhea" id="RHEA-COMP:10136"/>
        <dbReference type="Rhea" id="RHEA-COMP:20101"/>
        <dbReference type="ChEBI" id="CHEBI:15378"/>
        <dbReference type="ChEBI" id="CHEBI:30616"/>
        <dbReference type="ChEBI" id="CHEBI:46858"/>
        <dbReference type="ChEBI" id="CHEBI:61978"/>
        <dbReference type="ChEBI" id="CHEBI:456216"/>
        <dbReference type="EC" id="2.7.10.2"/>
    </reaction>
</comment>
<comment type="subcellular location">
    <subcellularLocation>
        <location evidence="1">Nucleus</location>
    </subcellularLocation>
</comment>
<comment type="similarity">
    <text evidence="3">Belongs to the protein kinase superfamily. Ser/Thr protein kinase family. WEE1 subfamily.</text>
</comment>
<sequence length="554" mass="61412">MRTAMSCGGGLVQRLDFSSSEEEDGLSNGINEAPQKGSPVSSWRTNNCPFPITPQRNERGLSPTQELSPSSDYSPDPSDKGAGGECPGTPLHYSTWKKLKLCDTPYTPKSLLYKTLPSPGSRVHCRGQRLLRFVAGTGAETEDPTLVNVNPFTPQSYRQTHFQPNGKRKERPEDDCSSDSQMKFTDKEHPSVFQSKRFVLRETNMESRYKTEFLEIEKIGAGEFGSVFKCVKRLDGCFYVIKRSKKPLAGSTDEQLALREVYAHAVLGHHPHVVRYYSAWAEDDHMIIQNEYCNGGSLQDLIMENNKKGQFVPEQELKEILLQVSMGLKYIHGSGLVHMDIKPSNIFICRKQTEVGEDESDGEDDVSSASVLYKIGDLGHVTSILNPQVEEGDSRFLANEILQEDYRQLPKADIFALGLTIALAAGAAPLPCNEDGWHHIRKGNLPHIPQPLTPAFLALLKLLVHPDPATRPPAASLAKNSVLRRCVGKAAELQKQLNVEKFKTAMLERELQAAKLAQDECLDLPPVSGFSCRGRKRLVGAKNARSLSFTCGGY</sequence>
<reference key="1">
    <citation type="submission" date="2004-07" db="EMBL/GenBank/DDBJ databases">
        <authorList>
            <consortium name="NIH - Xenopus Gene Collection (XGC) project"/>
        </authorList>
    </citation>
    <scope>NUCLEOTIDE SEQUENCE [LARGE SCALE MRNA]</scope>
    <source>
        <tissue>Oocyte</tissue>
    </source>
</reference>
<accession>Q6DFE0</accession>
<protein>
    <recommendedName>
        <fullName>Wee1-like protein kinase 2-C</fullName>
        <ecNumber>2.7.10.2</ecNumber>
    </recommendedName>
</protein>
<organism>
    <name type="scientific">Xenopus laevis</name>
    <name type="common">African clawed frog</name>
    <dbReference type="NCBI Taxonomy" id="8355"/>
    <lineage>
        <taxon>Eukaryota</taxon>
        <taxon>Metazoa</taxon>
        <taxon>Chordata</taxon>
        <taxon>Craniata</taxon>
        <taxon>Vertebrata</taxon>
        <taxon>Euteleostomi</taxon>
        <taxon>Amphibia</taxon>
        <taxon>Batrachia</taxon>
        <taxon>Anura</taxon>
        <taxon>Pipoidea</taxon>
        <taxon>Pipidae</taxon>
        <taxon>Xenopodinae</taxon>
        <taxon>Xenopus</taxon>
        <taxon>Xenopus</taxon>
    </lineage>
</organism>
<name>WEE2C_XENLA</name>
<evidence type="ECO:0000250" key="1"/>
<evidence type="ECO:0000255" key="2"/>
<evidence type="ECO:0000255" key="3">
    <source>
        <dbReference type="PROSITE-ProRule" id="PRU00159"/>
    </source>
</evidence>
<evidence type="ECO:0000255" key="4">
    <source>
        <dbReference type="PROSITE-ProRule" id="PRU10027"/>
    </source>
</evidence>
<evidence type="ECO:0000256" key="5">
    <source>
        <dbReference type="SAM" id="MobiDB-lite"/>
    </source>
</evidence>
<gene>
    <name type="primary">wee2-c</name>
</gene>
<proteinExistence type="evidence at transcript level"/>
<dbReference type="EC" id="2.7.10.2"/>
<dbReference type="EMBL" id="BC076799">
    <property type="protein sequence ID" value="AAH76799.1"/>
    <property type="molecule type" value="mRNA"/>
</dbReference>
<dbReference type="SMR" id="Q6DFE0"/>
<dbReference type="AGR" id="Xenbase:XB-GENE-17333442"/>
<dbReference type="Xenbase" id="XB-GENE-17333442">
    <property type="gene designation" value="wee2.S"/>
</dbReference>
<dbReference type="Proteomes" id="UP000186698">
    <property type="component" value="Unplaced"/>
</dbReference>
<dbReference type="GO" id="GO:0005737">
    <property type="term" value="C:cytoplasm"/>
    <property type="evidence" value="ECO:0000318"/>
    <property type="project" value="GO_Central"/>
</dbReference>
<dbReference type="GO" id="GO:0005634">
    <property type="term" value="C:nucleus"/>
    <property type="evidence" value="ECO:0000318"/>
    <property type="project" value="GO_Central"/>
</dbReference>
<dbReference type="GO" id="GO:0005524">
    <property type="term" value="F:ATP binding"/>
    <property type="evidence" value="ECO:0007669"/>
    <property type="project" value="UniProtKB-KW"/>
</dbReference>
<dbReference type="GO" id="GO:0000287">
    <property type="term" value="F:magnesium ion binding"/>
    <property type="evidence" value="ECO:0007669"/>
    <property type="project" value="InterPro"/>
</dbReference>
<dbReference type="GO" id="GO:0004715">
    <property type="term" value="F:non-membrane spanning protein tyrosine kinase activity"/>
    <property type="evidence" value="ECO:0007669"/>
    <property type="project" value="UniProtKB-EC"/>
</dbReference>
<dbReference type="GO" id="GO:0004713">
    <property type="term" value="F:protein tyrosine kinase activity"/>
    <property type="evidence" value="ECO:0000318"/>
    <property type="project" value="GO_Central"/>
</dbReference>
<dbReference type="GO" id="GO:0051321">
    <property type="term" value="P:meiotic cell cycle"/>
    <property type="evidence" value="ECO:0007669"/>
    <property type="project" value="UniProtKB-KW"/>
</dbReference>
<dbReference type="GO" id="GO:0000278">
    <property type="term" value="P:mitotic cell cycle"/>
    <property type="evidence" value="ECO:0007669"/>
    <property type="project" value="InterPro"/>
</dbReference>
<dbReference type="GO" id="GO:0060631">
    <property type="term" value="P:regulation of meiosis I"/>
    <property type="evidence" value="ECO:0000318"/>
    <property type="project" value="GO_Central"/>
</dbReference>
<dbReference type="FunFam" id="3.30.200.20:FF:000115">
    <property type="entry name" value="Wee1-like kinase 2"/>
    <property type="match status" value="1"/>
</dbReference>
<dbReference type="FunFam" id="1.10.510.10:FF:000217">
    <property type="entry name" value="Wee1-like protein kinase"/>
    <property type="match status" value="1"/>
</dbReference>
<dbReference type="Gene3D" id="3.30.200.20">
    <property type="entry name" value="Phosphorylase Kinase, domain 1"/>
    <property type="match status" value="1"/>
</dbReference>
<dbReference type="Gene3D" id="1.10.510.10">
    <property type="entry name" value="Transferase(Phosphotransferase) domain 1"/>
    <property type="match status" value="1"/>
</dbReference>
<dbReference type="InterPro" id="IPR050339">
    <property type="entry name" value="CC_SR_Kinase"/>
</dbReference>
<dbReference type="InterPro" id="IPR011009">
    <property type="entry name" value="Kinase-like_dom_sf"/>
</dbReference>
<dbReference type="InterPro" id="IPR000719">
    <property type="entry name" value="Prot_kinase_dom"/>
</dbReference>
<dbReference type="InterPro" id="IPR017441">
    <property type="entry name" value="Protein_kinase_ATP_BS"/>
</dbReference>
<dbReference type="InterPro" id="IPR008271">
    <property type="entry name" value="Ser/Thr_kinase_AS"/>
</dbReference>
<dbReference type="InterPro" id="IPR017164">
    <property type="entry name" value="Wee1-like_protein_kinase"/>
</dbReference>
<dbReference type="PANTHER" id="PTHR11042">
    <property type="entry name" value="EUKARYOTIC TRANSLATION INITIATION FACTOR 2-ALPHA KINASE EIF2-ALPHA KINASE -RELATED"/>
    <property type="match status" value="1"/>
</dbReference>
<dbReference type="PANTHER" id="PTHR11042:SF75">
    <property type="entry name" value="WEE1-LIKE PROTEIN KINASE 2"/>
    <property type="match status" value="1"/>
</dbReference>
<dbReference type="Pfam" id="PF00069">
    <property type="entry name" value="Pkinase"/>
    <property type="match status" value="1"/>
</dbReference>
<dbReference type="PIRSF" id="PIRSF037281">
    <property type="entry name" value="Wee1-like_protein_kinase"/>
    <property type="match status" value="1"/>
</dbReference>
<dbReference type="SMART" id="SM00220">
    <property type="entry name" value="S_TKc"/>
    <property type="match status" value="1"/>
</dbReference>
<dbReference type="SUPFAM" id="SSF56112">
    <property type="entry name" value="Protein kinase-like (PK-like)"/>
    <property type="match status" value="1"/>
</dbReference>
<dbReference type="PROSITE" id="PS00107">
    <property type="entry name" value="PROTEIN_KINASE_ATP"/>
    <property type="match status" value="1"/>
</dbReference>
<dbReference type="PROSITE" id="PS50011">
    <property type="entry name" value="PROTEIN_KINASE_DOM"/>
    <property type="match status" value="1"/>
</dbReference>
<dbReference type="PROSITE" id="PS00108">
    <property type="entry name" value="PROTEIN_KINASE_ST"/>
    <property type="match status" value="1"/>
</dbReference>